<comment type="function">
    <text evidence="1">Binds as a heterodimer with protein bS6 to the central domain of the 16S rRNA, where it helps stabilize the platform of the 30S subunit.</text>
</comment>
<comment type="subunit">
    <text evidence="1">Part of the 30S ribosomal subunit. Forms a tight heterodimer with protein bS6.</text>
</comment>
<comment type="similarity">
    <text evidence="1">Belongs to the bacterial ribosomal protein bS18 family.</text>
</comment>
<proteinExistence type="inferred from homology"/>
<dbReference type="EMBL" id="CP000117">
    <property type="protein sequence ID" value="ABA20945.1"/>
    <property type="molecule type" value="Genomic_DNA"/>
</dbReference>
<dbReference type="RefSeq" id="WP_010998584.1">
    <property type="nucleotide sequence ID" value="NC_007413.1"/>
</dbReference>
<dbReference type="SMR" id="Q3MDJ1"/>
<dbReference type="STRING" id="240292.Ava_1321"/>
<dbReference type="GeneID" id="58723989"/>
<dbReference type="KEGG" id="ava:Ava_1321"/>
<dbReference type="eggNOG" id="COG0238">
    <property type="taxonomic scope" value="Bacteria"/>
</dbReference>
<dbReference type="HOGENOM" id="CLU_148710_2_3_3"/>
<dbReference type="Proteomes" id="UP000002533">
    <property type="component" value="Chromosome"/>
</dbReference>
<dbReference type="GO" id="GO:0022627">
    <property type="term" value="C:cytosolic small ribosomal subunit"/>
    <property type="evidence" value="ECO:0007669"/>
    <property type="project" value="TreeGrafter"/>
</dbReference>
<dbReference type="GO" id="GO:0070181">
    <property type="term" value="F:small ribosomal subunit rRNA binding"/>
    <property type="evidence" value="ECO:0007669"/>
    <property type="project" value="TreeGrafter"/>
</dbReference>
<dbReference type="GO" id="GO:0003735">
    <property type="term" value="F:structural constituent of ribosome"/>
    <property type="evidence" value="ECO:0007669"/>
    <property type="project" value="InterPro"/>
</dbReference>
<dbReference type="GO" id="GO:0006412">
    <property type="term" value="P:translation"/>
    <property type="evidence" value="ECO:0007669"/>
    <property type="project" value="UniProtKB-UniRule"/>
</dbReference>
<dbReference type="FunFam" id="4.10.640.10:FF:000002">
    <property type="entry name" value="30S ribosomal protein S18, chloroplastic"/>
    <property type="match status" value="1"/>
</dbReference>
<dbReference type="Gene3D" id="4.10.640.10">
    <property type="entry name" value="Ribosomal protein S18"/>
    <property type="match status" value="1"/>
</dbReference>
<dbReference type="HAMAP" id="MF_00270">
    <property type="entry name" value="Ribosomal_bS18"/>
    <property type="match status" value="1"/>
</dbReference>
<dbReference type="InterPro" id="IPR001648">
    <property type="entry name" value="Ribosomal_bS18"/>
</dbReference>
<dbReference type="InterPro" id="IPR018275">
    <property type="entry name" value="Ribosomal_bS18_CS"/>
</dbReference>
<dbReference type="InterPro" id="IPR036870">
    <property type="entry name" value="Ribosomal_bS18_sf"/>
</dbReference>
<dbReference type="NCBIfam" id="TIGR00165">
    <property type="entry name" value="S18"/>
    <property type="match status" value="1"/>
</dbReference>
<dbReference type="PANTHER" id="PTHR13479">
    <property type="entry name" value="30S RIBOSOMAL PROTEIN S18"/>
    <property type="match status" value="1"/>
</dbReference>
<dbReference type="PANTHER" id="PTHR13479:SF40">
    <property type="entry name" value="SMALL RIBOSOMAL SUBUNIT PROTEIN BS18M"/>
    <property type="match status" value="1"/>
</dbReference>
<dbReference type="Pfam" id="PF01084">
    <property type="entry name" value="Ribosomal_S18"/>
    <property type="match status" value="1"/>
</dbReference>
<dbReference type="PRINTS" id="PR00974">
    <property type="entry name" value="RIBOSOMALS18"/>
</dbReference>
<dbReference type="SUPFAM" id="SSF46911">
    <property type="entry name" value="Ribosomal protein S18"/>
    <property type="match status" value="1"/>
</dbReference>
<dbReference type="PROSITE" id="PS00057">
    <property type="entry name" value="RIBOSOMAL_S18"/>
    <property type="match status" value="1"/>
</dbReference>
<accession>Q3MDJ1</accession>
<sequence length="71" mass="8282">MSYYRRRLSPIKPGEPIDYKDVDLLRKFITERGKILPRRITGLTAKQQRELTLAIKRSRLVALLPFINAEG</sequence>
<gene>
    <name evidence="1" type="primary">rpsR</name>
    <name evidence="1" type="synonym">rps18</name>
    <name type="ordered locus">Ava_1321</name>
</gene>
<protein>
    <recommendedName>
        <fullName evidence="1">Small ribosomal subunit protein bS18</fullName>
    </recommendedName>
    <alternativeName>
        <fullName evidence="2">30S ribosomal protein S18</fullName>
    </alternativeName>
</protein>
<reference key="1">
    <citation type="journal article" date="2014" name="Stand. Genomic Sci.">
        <title>Complete genome sequence of Anabaena variabilis ATCC 29413.</title>
        <authorList>
            <person name="Thiel T."/>
            <person name="Pratte B.S."/>
            <person name="Zhong J."/>
            <person name="Goodwin L."/>
            <person name="Copeland A."/>
            <person name="Lucas S."/>
            <person name="Han C."/>
            <person name="Pitluck S."/>
            <person name="Land M.L."/>
            <person name="Kyrpides N.C."/>
            <person name="Woyke T."/>
        </authorList>
    </citation>
    <scope>NUCLEOTIDE SEQUENCE [LARGE SCALE GENOMIC DNA]</scope>
    <source>
        <strain>ATCC 29413 / PCC 7937</strain>
    </source>
</reference>
<keyword id="KW-0687">Ribonucleoprotein</keyword>
<keyword id="KW-0689">Ribosomal protein</keyword>
<keyword id="KW-0694">RNA-binding</keyword>
<keyword id="KW-0699">rRNA-binding</keyword>
<organism>
    <name type="scientific">Trichormus variabilis (strain ATCC 29413 / PCC 7937)</name>
    <name type="common">Anabaena variabilis</name>
    <dbReference type="NCBI Taxonomy" id="240292"/>
    <lineage>
        <taxon>Bacteria</taxon>
        <taxon>Bacillati</taxon>
        <taxon>Cyanobacteriota</taxon>
        <taxon>Cyanophyceae</taxon>
        <taxon>Nostocales</taxon>
        <taxon>Nostocaceae</taxon>
        <taxon>Trichormus</taxon>
    </lineage>
</organism>
<feature type="chain" id="PRO_1000003440" description="Small ribosomal subunit protein bS18">
    <location>
        <begin position="1"/>
        <end position="71"/>
    </location>
</feature>
<evidence type="ECO:0000255" key="1">
    <source>
        <dbReference type="HAMAP-Rule" id="MF_00270"/>
    </source>
</evidence>
<evidence type="ECO:0000305" key="2"/>
<name>RS18_TRIV2</name>